<reference key="1">
    <citation type="journal article" date="2001" name="Science">
        <title>Comparative genomics of Listeria species.</title>
        <authorList>
            <person name="Glaser P."/>
            <person name="Frangeul L."/>
            <person name="Buchrieser C."/>
            <person name="Rusniok C."/>
            <person name="Amend A."/>
            <person name="Baquero F."/>
            <person name="Berche P."/>
            <person name="Bloecker H."/>
            <person name="Brandt P."/>
            <person name="Chakraborty T."/>
            <person name="Charbit A."/>
            <person name="Chetouani F."/>
            <person name="Couve E."/>
            <person name="de Daruvar A."/>
            <person name="Dehoux P."/>
            <person name="Domann E."/>
            <person name="Dominguez-Bernal G."/>
            <person name="Duchaud E."/>
            <person name="Durant L."/>
            <person name="Dussurget O."/>
            <person name="Entian K.-D."/>
            <person name="Fsihi H."/>
            <person name="Garcia-del Portillo F."/>
            <person name="Garrido P."/>
            <person name="Gautier L."/>
            <person name="Goebel W."/>
            <person name="Gomez-Lopez N."/>
            <person name="Hain T."/>
            <person name="Hauf J."/>
            <person name="Jackson D."/>
            <person name="Jones L.-M."/>
            <person name="Kaerst U."/>
            <person name="Kreft J."/>
            <person name="Kuhn M."/>
            <person name="Kunst F."/>
            <person name="Kurapkat G."/>
            <person name="Madueno E."/>
            <person name="Maitournam A."/>
            <person name="Mata Vicente J."/>
            <person name="Ng E."/>
            <person name="Nedjari H."/>
            <person name="Nordsiek G."/>
            <person name="Novella S."/>
            <person name="de Pablos B."/>
            <person name="Perez-Diaz J.-C."/>
            <person name="Purcell R."/>
            <person name="Remmel B."/>
            <person name="Rose M."/>
            <person name="Schlueter T."/>
            <person name="Simoes N."/>
            <person name="Tierrez A."/>
            <person name="Vazquez-Boland J.-A."/>
            <person name="Voss H."/>
            <person name="Wehland J."/>
            <person name="Cossart P."/>
        </authorList>
    </citation>
    <scope>NUCLEOTIDE SEQUENCE [LARGE SCALE GENOMIC DNA]</scope>
    <source>
        <strain>ATCC BAA-679 / EGD-e</strain>
    </source>
</reference>
<dbReference type="EC" id="6.3.4.3" evidence="1"/>
<dbReference type="EMBL" id="AL591981">
    <property type="protein sequence ID" value="CAC99955.1"/>
    <property type="status" value="ALT_FRAME"/>
    <property type="molecule type" value="Genomic_DNA"/>
</dbReference>
<dbReference type="PIR" id="AE1309">
    <property type="entry name" value="AE1309"/>
</dbReference>
<dbReference type="RefSeq" id="NP_465401.1">
    <property type="nucleotide sequence ID" value="NC_003210.1"/>
</dbReference>
<dbReference type="RefSeq" id="WP_010989835.1">
    <property type="nucleotide sequence ID" value="NC_003210.1"/>
</dbReference>
<dbReference type="SMR" id="Q8Y624"/>
<dbReference type="STRING" id="169963.gene:17594562"/>
<dbReference type="PaxDb" id="169963-lmo1877"/>
<dbReference type="EnsemblBacteria" id="CAC99955">
    <property type="protein sequence ID" value="CAC99955"/>
    <property type="gene ID" value="CAC99955"/>
</dbReference>
<dbReference type="GeneID" id="985815"/>
<dbReference type="KEGG" id="lmo:lmo1877"/>
<dbReference type="PATRIC" id="fig|169963.11.peg.1922"/>
<dbReference type="eggNOG" id="COG2759">
    <property type="taxonomic scope" value="Bacteria"/>
</dbReference>
<dbReference type="HOGENOM" id="CLU_003601_3_3_9"/>
<dbReference type="OrthoDB" id="9761733at2"/>
<dbReference type="PhylomeDB" id="Q8Y624"/>
<dbReference type="UniPathway" id="UPA00193"/>
<dbReference type="Proteomes" id="UP000000817">
    <property type="component" value="Chromosome"/>
</dbReference>
<dbReference type="GO" id="GO:0005524">
    <property type="term" value="F:ATP binding"/>
    <property type="evidence" value="ECO:0007669"/>
    <property type="project" value="UniProtKB-UniRule"/>
</dbReference>
<dbReference type="GO" id="GO:0004329">
    <property type="term" value="F:formate-tetrahydrofolate ligase activity"/>
    <property type="evidence" value="ECO:0007669"/>
    <property type="project" value="UniProtKB-UniRule"/>
</dbReference>
<dbReference type="GO" id="GO:0035999">
    <property type="term" value="P:tetrahydrofolate interconversion"/>
    <property type="evidence" value="ECO:0007669"/>
    <property type="project" value="UniProtKB-UniRule"/>
</dbReference>
<dbReference type="CDD" id="cd00477">
    <property type="entry name" value="FTHFS"/>
    <property type="match status" value="1"/>
</dbReference>
<dbReference type="FunFam" id="3.30.1510.10:FF:000001">
    <property type="entry name" value="Formate--tetrahydrofolate ligase"/>
    <property type="match status" value="1"/>
</dbReference>
<dbReference type="FunFam" id="3.10.410.10:FF:000001">
    <property type="entry name" value="Putative formate--tetrahydrofolate ligase"/>
    <property type="match status" value="1"/>
</dbReference>
<dbReference type="Gene3D" id="3.30.1510.10">
    <property type="entry name" value="Domain 2, N(10)-formyltetrahydrofolate synthetase"/>
    <property type="match status" value="1"/>
</dbReference>
<dbReference type="Gene3D" id="3.10.410.10">
    <property type="entry name" value="Formyltetrahydrofolate synthetase, domain 3"/>
    <property type="match status" value="1"/>
</dbReference>
<dbReference type="Gene3D" id="3.40.50.300">
    <property type="entry name" value="P-loop containing nucleotide triphosphate hydrolases"/>
    <property type="match status" value="1"/>
</dbReference>
<dbReference type="HAMAP" id="MF_01543">
    <property type="entry name" value="FTHFS"/>
    <property type="match status" value="1"/>
</dbReference>
<dbReference type="InterPro" id="IPR000559">
    <property type="entry name" value="Formate_THF_ligase"/>
</dbReference>
<dbReference type="InterPro" id="IPR020628">
    <property type="entry name" value="Formate_THF_ligase_CS"/>
</dbReference>
<dbReference type="InterPro" id="IPR027417">
    <property type="entry name" value="P-loop_NTPase"/>
</dbReference>
<dbReference type="NCBIfam" id="NF010030">
    <property type="entry name" value="PRK13505.1"/>
    <property type="match status" value="1"/>
</dbReference>
<dbReference type="Pfam" id="PF01268">
    <property type="entry name" value="FTHFS"/>
    <property type="match status" value="1"/>
</dbReference>
<dbReference type="SUPFAM" id="SSF52540">
    <property type="entry name" value="P-loop containing nucleoside triphosphate hydrolases"/>
    <property type="match status" value="1"/>
</dbReference>
<dbReference type="PROSITE" id="PS00721">
    <property type="entry name" value="FTHFS_1"/>
    <property type="match status" value="1"/>
</dbReference>
<dbReference type="PROSITE" id="PS00722">
    <property type="entry name" value="FTHFS_2"/>
    <property type="match status" value="1"/>
</dbReference>
<keyword id="KW-0067">ATP-binding</keyword>
<keyword id="KW-0436">Ligase</keyword>
<keyword id="KW-0547">Nucleotide-binding</keyword>
<keyword id="KW-0554">One-carbon metabolism</keyword>
<keyword id="KW-1185">Reference proteome</keyword>
<name>FTHS_LISMO</name>
<protein>
    <recommendedName>
        <fullName evidence="1">Formate--tetrahydrofolate ligase</fullName>
        <ecNumber evidence="1">6.3.4.3</ecNumber>
    </recommendedName>
    <alternativeName>
        <fullName evidence="1">Formyltetrahydrofolate synthetase</fullName>
        <shortName evidence="1">FHS</shortName>
        <shortName evidence="1">FTHFS</shortName>
    </alternativeName>
</protein>
<proteinExistence type="inferred from homology"/>
<feature type="chain" id="PRO_0000199357" description="Formate--tetrahydrofolate ligase">
    <location>
        <begin position="1"/>
        <end position="560"/>
    </location>
</feature>
<feature type="binding site" evidence="1">
    <location>
        <begin position="69"/>
        <end position="76"/>
    </location>
    <ligand>
        <name>ATP</name>
        <dbReference type="ChEBI" id="CHEBI:30616"/>
    </ligand>
</feature>
<organism>
    <name type="scientific">Listeria monocytogenes serovar 1/2a (strain ATCC BAA-679 / EGD-e)</name>
    <dbReference type="NCBI Taxonomy" id="169963"/>
    <lineage>
        <taxon>Bacteria</taxon>
        <taxon>Bacillati</taxon>
        <taxon>Bacillota</taxon>
        <taxon>Bacilli</taxon>
        <taxon>Bacillales</taxon>
        <taxon>Listeriaceae</taxon>
        <taxon>Listeria</taxon>
    </lineage>
</organism>
<sequence length="560" mass="60086">MSNKVKSDIEIASKAEILPVTTIAEHLGLDADALELYGKYKAKLSYDTIHSLKDKEPGKLVLVTAINPTPAGEGKSTVTVGLGDALSKKDKKTVIALREPSLGPTMGIKGGATGGGYAQVIPMEDINLHFTGDFHAITAANNALSAFIDNHMQQGNDLEIDGRRIVWKRVVDLNDRALRKVVVGLGGPIQGVPREDGFDITVASEIMAIICLASDLKDLKKRLSEIVIGYNYKKEPITVGEMGYEGALTLLLKDALKPNLVQTLEHTPAIVHGGPFANIAHGCNSVSATSTALRLGDYVVTEAGFGADLGAEKFLDIKVPALGKAPDCVVIVATIRALKMHGGALKTELSEENVDALAKGFTNLQKHTESIQTFGIPYVVAINKFITDSDAEVAKLEALCEEHGIPFSLTEVWEKGGDGGLELADKVIAAVESGAADYKRIYDDAWSMEEKLEAIVTKVYGGIGVELSSKAQKQIVEFKKYGWDRYPICMAKTQYSLSDDPTLLGRPTDFVIHIREFIPKLGAGFVVALTGDVMTMPGLPKKPAALNMDVDENGNAQGLF</sequence>
<accession>Q8Y624</accession>
<gene>
    <name evidence="1" type="primary">fhs</name>
    <name type="ordered locus">lmo1877</name>
</gene>
<evidence type="ECO:0000255" key="1">
    <source>
        <dbReference type="HAMAP-Rule" id="MF_01543"/>
    </source>
</evidence>
<evidence type="ECO:0000305" key="2"/>
<comment type="catalytic activity">
    <reaction evidence="1">
        <text>(6S)-5,6,7,8-tetrahydrofolate + formate + ATP = (6R)-10-formyltetrahydrofolate + ADP + phosphate</text>
        <dbReference type="Rhea" id="RHEA:20221"/>
        <dbReference type="ChEBI" id="CHEBI:15740"/>
        <dbReference type="ChEBI" id="CHEBI:30616"/>
        <dbReference type="ChEBI" id="CHEBI:43474"/>
        <dbReference type="ChEBI" id="CHEBI:57453"/>
        <dbReference type="ChEBI" id="CHEBI:195366"/>
        <dbReference type="ChEBI" id="CHEBI:456216"/>
        <dbReference type="EC" id="6.3.4.3"/>
    </reaction>
</comment>
<comment type="pathway">
    <text evidence="1">One-carbon metabolism; tetrahydrofolate interconversion.</text>
</comment>
<comment type="similarity">
    <text evidence="1">Belongs to the formate--tetrahydrofolate ligase family.</text>
</comment>
<comment type="sequence caution" evidence="2">
    <conflict type="frameshift">
        <sequence resource="EMBL-CDS" id="CAC99955"/>
    </conflict>
</comment>